<proteinExistence type="evidence at protein level"/>
<reference evidence="6" key="1">
    <citation type="journal article" date="2016" name="PLoS ONE">
        <title>Discovery and characterization of a thermostable and highly halotolerant GH5 cellulase from an Icelandic hot spring isolate.</title>
        <authorList>
            <person name="Zarafeta D."/>
            <person name="Kissas D."/>
            <person name="Sayer C."/>
            <person name="Gudbergsdottir S.R."/>
            <person name="Ladoukakis E."/>
            <person name="Isupov M.N."/>
            <person name="Chatziioannou A."/>
            <person name="Peng X."/>
            <person name="Littlechild J.A."/>
            <person name="Skretas G."/>
            <person name="Kolisis F.N."/>
        </authorList>
    </citation>
    <scope>NUCLEOTIDE SEQUENCE [GENOMIC DNA]</scope>
    <scope>X-RAY CRYSTALLOGRAPHY (1.88 ANGSTROMS) OF 50-383</scope>
    <scope>FUNCTION</scope>
    <scope>CATALYTIC ACTIVITY</scope>
    <scope>SUBUNIT</scope>
    <scope>BIOPHYSICOCHEMICAL PROPERTIES</scope>
    <scope>ACTIVE SITE</scope>
    <scope>ACTIVITY REGULATION</scope>
    <source>
        <strain evidence="6">A57Txylan</strain>
    </source>
</reference>
<sequence>MNKWHINKWYFFVGMLVIFAVIISLILKDTSLTFSSYDREKFPHLIGNSMVKKPSLAGRLKIIEIDGRKTLGDQHGNPIQLRGMSTHGLQWFPQIINNNAFSALSKDWEANVIRLAMYVGEGGYSTDPSVKEKVIEGINLAIKNDMYVIVDWHILNPGDPNAKIYSGAKEFFKEIASKYPNDLHIIYELANEPNPTESDITNDIAGWEKVKKYAEPIIKMLRDMGNENIIIVGNPEWSTRPDLAVNDPIDDKNVMYSAHFYTGSASVWENGNKGHIARNIEKALENGLTVFVTEWGTSEASGDGGPYLNEADEWLEFLNSNNISWVNWSLANKNEASAAFLPTTSLDPGNGKVWAVNQLSLSGEYVRARIKGIPYKPISRETMGK</sequence>
<evidence type="ECO:0000250" key="1">
    <source>
        <dbReference type="UniProtKB" id="O85465"/>
    </source>
</evidence>
<evidence type="ECO:0000255" key="2"/>
<evidence type="ECO:0000255" key="3">
    <source>
        <dbReference type="RuleBase" id="RU361153"/>
    </source>
</evidence>
<evidence type="ECO:0000269" key="4">
    <source>
    </source>
</evidence>
<evidence type="ECO:0000305" key="5">
    <source>
    </source>
</evidence>
<evidence type="ECO:0000312" key="6">
    <source>
        <dbReference type="EMBL" id="ALX38276.1"/>
    </source>
</evidence>
<name>CELDZ_THESZ</name>
<dbReference type="EC" id="3.2.1.4" evidence="4"/>
<dbReference type="EMBL" id="KT844947">
    <property type="protein sequence ID" value="ALX38276.1"/>
    <property type="molecule type" value="Genomic_DNA"/>
</dbReference>
<dbReference type="PDB" id="5FIP">
    <property type="method" value="X-ray"/>
    <property type="resolution" value="1.88 A"/>
    <property type="chains" value="A/B/C/D=50-383"/>
</dbReference>
<dbReference type="PDBsum" id="5FIP"/>
<dbReference type="SMR" id="A0A0U4EBH5"/>
<dbReference type="GO" id="GO:0005886">
    <property type="term" value="C:plasma membrane"/>
    <property type="evidence" value="ECO:0007669"/>
    <property type="project" value="UniProtKB-SubCell"/>
</dbReference>
<dbReference type="GO" id="GO:0008810">
    <property type="term" value="F:cellulase activity"/>
    <property type="evidence" value="ECO:0000314"/>
    <property type="project" value="UniProtKB"/>
</dbReference>
<dbReference type="GO" id="GO:0030245">
    <property type="term" value="P:cellulose catabolic process"/>
    <property type="evidence" value="ECO:0000314"/>
    <property type="project" value="UniProtKB"/>
</dbReference>
<dbReference type="FunFam" id="3.20.20.80:FF:000375">
    <property type="entry name" value="Glycoside hydrolase family 5"/>
    <property type="match status" value="1"/>
</dbReference>
<dbReference type="Gene3D" id="3.20.20.80">
    <property type="entry name" value="Glycosidases"/>
    <property type="match status" value="1"/>
</dbReference>
<dbReference type="InterPro" id="IPR001547">
    <property type="entry name" value="Glyco_hydro_5"/>
</dbReference>
<dbReference type="InterPro" id="IPR018087">
    <property type="entry name" value="Glyco_hydro_5_CS"/>
</dbReference>
<dbReference type="InterPro" id="IPR017853">
    <property type="entry name" value="Glycoside_hydrolase_SF"/>
</dbReference>
<dbReference type="PANTHER" id="PTHR34142">
    <property type="entry name" value="ENDO-BETA-1,4-GLUCANASE A"/>
    <property type="match status" value="1"/>
</dbReference>
<dbReference type="PANTHER" id="PTHR34142:SF1">
    <property type="entry name" value="GLYCOSIDE HYDROLASE FAMILY 5 DOMAIN-CONTAINING PROTEIN"/>
    <property type="match status" value="1"/>
</dbReference>
<dbReference type="Pfam" id="PF00150">
    <property type="entry name" value="Cellulase"/>
    <property type="match status" value="1"/>
</dbReference>
<dbReference type="SUPFAM" id="SSF51445">
    <property type="entry name" value="(Trans)glycosidases"/>
    <property type="match status" value="1"/>
</dbReference>
<dbReference type="PROSITE" id="PS00659">
    <property type="entry name" value="GLYCOSYL_HYDROL_F5"/>
    <property type="match status" value="1"/>
</dbReference>
<feature type="chain" id="PRO_0000440609" description="Cellulase CelDZ1">
    <location>
        <begin position="1"/>
        <end position="385"/>
    </location>
</feature>
<feature type="transmembrane region" description="Helical" evidence="2">
    <location>
        <begin position="6"/>
        <end position="26"/>
    </location>
</feature>
<feature type="active site" description="Proton donor" evidence="5">
    <location>
        <position position="192"/>
    </location>
</feature>
<feature type="active site" description="Nucleophile" evidence="5">
    <location>
        <position position="294"/>
    </location>
</feature>
<feature type="binding site" evidence="1">
    <location>
        <position position="87"/>
    </location>
    <ligand>
        <name>substrate</name>
    </ligand>
</feature>
<feature type="binding site" evidence="1">
    <location>
        <begin position="91"/>
        <end position="92"/>
    </location>
    <ligand>
        <name>substrate</name>
    </ligand>
</feature>
<feature type="binding site" evidence="1">
    <location>
        <position position="118"/>
    </location>
    <ligand>
        <name>substrate</name>
    </ligand>
</feature>
<feature type="binding site" evidence="1">
    <location>
        <position position="153"/>
    </location>
    <ligand>
        <name>substrate</name>
    </ligand>
</feature>
<feature type="binding site" evidence="1">
    <location>
        <position position="261"/>
    </location>
    <ligand>
        <name>substrate</name>
    </ligand>
</feature>
<feature type="binding site" evidence="1">
    <location>
        <begin position="300"/>
        <end position="301"/>
    </location>
    <ligand>
        <name>substrate</name>
    </ligand>
</feature>
<feature type="binding site" evidence="1">
    <location>
        <position position="328"/>
    </location>
    <ligand>
        <name>substrate</name>
    </ligand>
</feature>
<feature type="binding site" evidence="1">
    <location>
        <begin position="333"/>
        <end position="335"/>
    </location>
    <ligand>
        <name>substrate</name>
    </ligand>
</feature>
<comment type="function">
    <text evidence="4">Thermostable endoglucanase that has high activity with soluble polymeric substrates containing beta-1,4-glycosidic bonds, such as carboxymethyl cellulose (CMC) and barley beta-D-glucan (in vitro). Has no activity with cellobiose and filter paper. Has no activity with substrates containing beta-1,3-linked glycans, such as laminarin. Likewise, lacks activity with xylan, galactomannan and pectin.</text>
</comment>
<comment type="catalytic activity">
    <reaction evidence="4">
        <text>Endohydrolysis of (1-&gt;4)-beta-D-glucosidic linkages in cellulose, lichenin and cereal beta-D-glucans.</text>
        <dbReference type="EC" id="3.2.1.4"/>
    </reaction>
</comment>
<comment type="activity regulation">
    <text evidence="4">Activity is enhanced by 1mM Mn(2+), but is not affected by 1mM Ca(2+), Mg(2+), Zn(2+), K(+), Na(+) or Li(+). Activity is not inhibited by EDTA (in vitro).</text>
</comment>
<comment type="biophysicochemical properties">
    <kinetics>
        <KM evidence="4">6.1 mg/ml for carboxymethyl cellulose</KM>
        <text evidence="4">kcat is 46.3 sec(-1) with carboxymethyl cellulose as substrate.</text>
    </kinetics>
    <phDependence>
        <text evidence="4">Optimum pH is 5 with carboxymethyl cellulose as substrate. Retains 80% activity at pH 6, and about 50% at pH 7. Inactive at pH values below 4 and above 9.</text>
    </phDependence>
    <temperatureDependence>
        <text evidence="4">Optimum temperature is 70 degrees Celsius. Retains about 85% activity after 24 hours at 65 degrees Celsius. Retains at least 50% activity after 4 hours at 70 degrees Celsius. Rapidly looses activity at 75 degrees Celsius.</text>
    </temperatureDependence>
</comment>
<comment type="subunit">
    <text evidence="4">Monomer.</text>
</comment>
<comment type="subcellular location">
    <subcellularLocation>
        <location evidence="2">Cell membrane</location>
        <topology evidence="2">Single-pass membrane protein</topology>
    </subcellularLocation>
</comment>
<comment type="biotechnology">
    <text>Thermostable endoglucanase that retains activity in the presence of high salt concentrations, suggesting it might be used as an industrial enzyme for cellulose-based substrates.</text>
</comment>
<comment type="similarity">
    <text evidence="3">Belongs to the glycosyl hydrolase 5 (cellulase A) family.</text>
</comment>
<keyword id="KW-0002">3D-structure</keyword>
<keyword id="KW-0119">Carbohydrate metabolism</keyword>
<keyword id="KW-1003">Cell membrane</keyword>
<keyword id="KW-0136">Cellulose degradation</keyword>
<keyword id="KW-0326">Glycosidase</keyword>
<keyword id="KW-0378">Hydrolase</keyword>
<keyword id="KW-0472">Membrane</keyword>
<keyword id="KW-0624">Polysaccharide degradation</keyword>
<keyword id="KW-0812">Transmembrane</keyword>
<keyword id="KW-1133">Transmembrane helix</keyword>
<gene>
    <name evidence="6" type="primary">celDZ1a</name>
</gene>
<accession>A0A0U4EBH5</accession>
<protein>
    <recommendedName>
        <fullName>Cellulase CelDZ1</fullName>
        <ecNumber evidence="4">3.2.1.4</ecNumber>
    </recommendedName>
</protein>
<organism>
    <name type="scientific">Thermoanaerobacterium sp</name>
    <dbReference type="NCBI Taxonomy" id="40549"/>
    <lineage>
        <taxon>Bacteria</taxon>
        <taxon>Bacillati</taxon>
        <taxon>Bacillota</taxon>
        <taxon>Clostridia</taxon>
        <taxon>Thermoanaerobacterales</taxon>
        <taxon>Thermoanaerobacteraceae</taxon>
        <taxon>Thermoanaerobacterium</taxon>
    </lineage>
</organism>